<proteinExistence type="inferred from homology"/>
<sequence length="70" mass="7706">MKKDIHPNYVEFNATCSCGNVVTTRSTIGKDIHLDVCSACHPFYTGKQKAAETGGRVDKFNKRFAAIGKK</sequence>
<gene>
    <name evidence="1" type="primary">rpmE</name>
    <name type="ordered locus">CPS_4365</name>
</gene>
<name>RL31_COLP3</name>
<evidence type="ECO:0000255" key="1">
    <source>
        <dbReference type="HAMAP-Rule" id="MF_00501"/>
    </source>
</evidence>
<evidence type="ECO:0000305" key="2"/>
<organism>
    <name type="scientific">Colwellia psychrerythraea (strain 34H / ATCC BAA-681)</name>
    <name type="common">Vibrio psychroerythus</name>
    <dbReference type="NCBI Taxonomy" id="167879"/>
    <lineage>
        <taxon>Bacteria</taxon>
        <taxon>Pseudomonadati</taxon>
        <taxon>Pseudomonadota</taxon>
        <taxon>Gammaproteobacteria</taxon>
        <taxon>Alteromonadales</taxon>
        <taxon>Colwelliaceae</taxon>
        <taxon>Colwellia</taxon>
    </lineage>
</organism>
<reference key="1">
    <citation type="journal article" date="2005" name="Proc. Natl. Acad. Sci. U.S.A.">
        <title>The psychrophilic lifestyle as revealed by the genome sequence of Colwellia psychrerythraea 34H through genomic and proteomic analyses.</title>
        <authorList>
            <person name="Methe B.A."/>
            <person name="Nelson K.E."/>
            <person name="Deming J.W."/>
            <person name="Momen B."/>
            <person name="Melamud E."/>
            <person name="Zhang X."/>
            <person name="Moult J."/>
            <person name="Madupu R."/>
            <person name="Nelson W.C."/>
            <person name="Dodson R.J."/>
            <person name="Brinkac L.M."/>
            <person name="Daugherty S.C."/>
            <person name="Durkin A.S."/>
            <person name="DeBoy R.T."/>
            <person name="Kolonay J.F."/>
            <person name="Sullivan S.A."/>
            <person name="Zhou L."/>
            <person name="Davidsen T.M."/>
            <person name="Wu M."/>
            <person name="Huston A.L."/>
            <person name="Lewis M."/>
            <person name="Weaver B."/>
            <person name="Weidman J.F."/>
            <person name="Khouri H."/>
            <person name="Utterback T.R."/>
            <person name="Feldblyum T.V."/>
            <person name="Fraser C.M."/>
        </authorList>
    </citation>
    <scope>NUCLEOTIDE SEQUENCE [LARGE SCALE GENOMIC DNA]</scope>
    <source>
        <strain>34H / ATCC BAA-681</strain>
    </source>
</reference>
<comment type="function">
    <text evidence="1">Binds the 23S rRNA.</text>
</comment>
<comment type="cofactor">
    <cofactor evidence="1">
        <name>Zn(2+)</name>
        <dbReference type="ChEBI" id="CHEBI:29105"/>
    </cofactor>
    <text evidence="1">Binds 1 zinc ion per subunit.</text>
</comment>
<comment type="subunit">
    <text evidence="1">Part of the 50S ribosomal subunit.</text>
</comment>
<comment type="similarity">
    <text evidence="1">Belongs to the bacterial ribosomal protein bL31 family. Type A subfamily.</text>
</comment>
<protein>
    <recommendedName>
        <fullName evidence="1">Large ribosomal subunit protein bL31</fullName>
    </recommendedName>
    <alternativeName>
        <fullName evidence="2">50S ribosomal protein L31</fullName>
    </alternativeName>
</protein>
<dbReference type="EMBL" id="CP000083">
    <property type="protein sequence ID" value="AAZ27020.1"/>
    <property type="molecule type" value="Genomic_DNA"/>
</dbReference>
<dbReference type="RefSeq" id="WP_011045095.1">
    <property type="nucleotide sequence ID" value="NC_003910.7"/>
</dbReference>
<dbReference type="SMR" id="Q47W08"/>
<dbReference type="STRING" id="167879.CPS_4365"/>
<dbReference type="KEGG" id="cps:CPS_4365"/>
<dbReference type="eggNOG" id="COG0254">
    <property type="taxonomic scope" value="Bacteria"/>
</dbReference>
<dbReference type="HOGENOM" id="CLU_114306_4_0_6"/>
<dbReference type="Proteomes" id="UP000000547">
    <property type="component" value="Chromosome"/>
</dbReference>
<dbReference type="GO" id="GO:1990904">
    <property type="term" value="C:ribonucleoprotein complex"/>
    <property type="evidence" value="ECO:0007669"/>
    <property type="project" value="UniProtKB-KW"/>
</dbReference>
<dbReference type="GO" id="GO:0005840">
    <property type="term" value="C:ribosome"/>
    <property type="evidence" value="ECO:0007669"/>
    <property type="project" value="UniProtKB-KW"/>
</dbReference>
<dbReference type="GO" id="GO:0046872">
    <property type="term" value="F:metal ion binding"/>
    <property type="evidence" value="ECO:0007669"/>
    <property type="project" value="UniProtKB-KW"/>
</dbReference>
<dbReference type="GO" id="GO:0019843">
    <property type="term" value="F:rRNA binding"/>
    <property type="evidence" value="ECO:0007669"/>
    <property type="project" value="UniProtKB-KW"/>
</dbReference>
<dbReference type="GO" id="GO:0003735">
    <property type="term" value="F:structural constituent of ribosome"/>
    <property type="evidence" value="ECO:0007669"/>
    <property type="project" value="InterPro"/>
</dbReference>
<dbReference type="GO" id="GO:0006412">
    <property type="term" value="P:translation"/>
    <property type="evidence" value="ECO:0007669"/>
    <property type="project" value="UniProtKB-UniRule"/>
</dbReference>
<dbReference type="Gene3D" id="4.10.830.30">
    <property type="entry name" value="Ribosomal protein L31"/>
    <property type="match status" value="1"/>
</dbReference>
<dbReference type="HAMAP" id="MF_00501">
    <property type="entry name" value="Ribosomal_bL31_1"/>
    <property type="match status" value="1"/>
</dbReference>
<dbReference type="InterPro" id="IPR034704">
    <property type="entry name" value="Ribosomal_bL28/bL31-like_sf"/>
</dbReference>
<dbReference type="InterPro" id="IPR002150">
    <property type="entry name" value="Ribosomal_bL31"/>
</dbReference>
<dbReference type="InterPro" id="IPR027491">
    <property type="entry name" value="Ribosomal_bL31_A"/>
</dbReference>
<dbReference type="InterPro" id="IPR042105">
    <property type="entry name" value="Ribosomal_bL31_sf"/>
</dbReference>
<dbReference type="NCBIfam" id="TIGR00105">
    <property type="entry name" value="L31"/>
    <property type="match status" value="1"/>
</dbReference>
<dbReference type="NCBIfam" id="NF000612">
    <property type="entry name" value="PRK00019.1"/>
    <property type="match status" value="1"/>
</dbReference>
<dbReference type="NCBIfam" id="NF001809">
    <property type="entry name" value="PRK00528.1"/>
    <property type="match status" value="1"/>
</dbReference>
<dbReference type="PANTHER" id="PTHR33280">
    <property type="entry name" value="50S RIBOSOMAL PROTEIN L31, CHLOROPLASTIC"/>
    <property type="match status" value="1"/>
</dbReference>
<dbReference type="PANTHER" id="PTHR33280:SF6">
    <property type="entry name" value="LARGE RIBOSOMAL SUBUNIT PROTEIN BL31A"/>
    <property type="match status" value="1"/>
</dbReference>
<dbReference type="Pfam" id="PF01197">
    <property type="entry name" value="Ribosomal_L31"/>
    <property type="match status" value="1"/>
</dbReference>
<dbReference type="PRINTS" id="PR01249">
    <property type="entry name" value="RIBOSOMALL31"/>
</dbReference>
<dbReference type="SUPFAM" id="SSF143800">
    <property type="entry name" value="L28p-like"/>
    <property type="match status" value="1"/>
</dbReference>
<dbReference type="PROSITE" id="PS01143">
    <property type="entry name" value="RIBOSOMAL_L31"/>
    <property type="match status" value="1"/>
</dbReference>
<keyword id="KW-0479">Metal-binding</keyword>
<keyword id="KW-0687">Ribonucleoprotein</keyword>
<keyword id="KW-0689">Ribosomal protein</keyword>
<keyword id="KW-0694">RNA-binding</keyword>
<keyword id="KW-0699">rRNA-binding</keyword>
<keyword id="KW-0862">Zinc</keyword>
<feature type="chain" id="PRO_0000259178" description="Large ribosomal subunit protein bL31">
    <location>
        <begin position="1"/>
        <end position="70"/>
    </location>
</feature>
<feature type="binding site" evidence="1">
    <location>
        <position position="16"/>
    </location>
    <ligand>
        <name>Zn(2+)</name>
        <dbReference type="ChEBI" id="CHEBI:29105"/>
    </ligand>
</feature>
<feature type="binding site" evidence="1">
    <location>
        <position position="18"/>
    </location>
    <ligand>
        <name>Zn(2+)</name>
        <dbReference type="ChEBI" id="CHEBI:29105"/>
    </ligand>
</feature>
<feature type="binding site" evidence="1">
    <location>
        <position position="37"/>
    </location>
    <ligand>
        <name>Zn(2+)</name>
        <dbReference type="ChEBI" id="CHEBI:29105"/>
    </ligand>
</feature>
<feature type="binding site" evidence="1">
    <location>
        <position position="40"/>
    </location>
    <ligand>
        <name>Zn(2+)</name>
        <dbReference type="ChEBI" id="CHEBI:29105"/>
    </ligand>
</feature>
<accession>Q47W08</accession>